<name>AROB_DECAR</name>
<sequence length="364" mass="39424">MKTVTQTLNVALGERSYPIHIGTDVLSRPELILPFLSQKRVVVVTNTSVAPLYLDELRSGLEKCGIETLPVVLPDGEQYKTWETLNLIFDALLAARCERNTTLIALGGGVIGDMGGFAAACYQRGMPFIQVPTTLLSQVDSSVGGKTAINHPMGKNMVGAFYQPRLVLADLSTLDTLPDRELKAGLAEVIKYGLIRDPDFFVWLEANLEKLLVRDKSALAYAVHRSCANKAEVVAADERESGERALLNLGHTFGHAIETGLGYGEWLHGEAVAAGTLIAAELSCRLGWIDADSVARIEKIFVRSGLPVKAPDLGAARYLELMSHDKKVQDGKLRLVLLREIGKAVVSDAATTAQMVDAIEARCT</sequence>
<gene>
    <name evidence="1" type="primary">aroB</name>
    <name type="ordered locus">Daro_0216</name>
</gene>
<proteinExistence type="inferred from homology"/>
<feature type="chain" id="PRO_0000231083" description="3-dehydroquinate synthase">
    <location>
        <begin position="1"/>
        <end position="364"/>
    </location>
</feature>
<feature type="binding site" evidence="1">
    <location>
        <begin position="75"/>
        <end position="80"/>
    </location>
    <ligand>
        <name>NAD(+)</name>
        <dbReference type="ChEBI" id="CHEBI:57540"/>
    </ligand>
</feature>
<feature type="binding site" evidence="1">
    <location>
        <begin position="109"/>
        <end position="113"/>
    </location>
    <ligand>
        <name>NAD(+)</name>
        <dbReference type="ChEBI" id="CHEBI:57540"/>
    </ligand>
</feature>
<feature type="binding site" evidence="1">
    <location>
        <begin position="133"/>
        <end position="134"/>
    </location>
    <ligand>
        <name>NAD(+)</name>
        <dbReference type="ChEBI" id="CHEBI:57540"/>
    </ligand>
</feature>
<feature type="binding site" evidence="1">
    <location>
        <position position="146"/>
    </location>
    <ligand>
        <name>NAD(+)</name>
        <dbReference type="ChEBI" id="CHEBI:57540"/>
    </ligand>
</feature>
<feature type="binding site" evidence="1">
    <location>
        <position position="155"/>
    </location>
    <ligand>
        <name>NAD(+)</name>
        <dbReference type="ChEBI" id="CHEBI:57540"/>
    </ligand>
</feature>
<feature type="binding site" evidence="1">
    <location>
        <begin position="173"/>
        <end position="176"/>
    </location>
    <ligand>
        <name>NAD(+)</name>
        <dbReference type="ChEBI" id="CHEBI:57540"/>
    </ligand>
</feature>
<feature type="binding site" evidence="1">
    <location>
        <position position="188"/>
    </location>
    <ligand>
        <name>Zn(2+)</name>
        <dbReference type="ChEBI" id="CHEBI:29105"/>
    </ligand>
</feature>
<feature type="binding site" evidence="1">
    <location>
        <position position="251"/>
    </location>
    <ligand>
        <name>Zn(2+)</name>
        <dbReference type="ChEBI" id="CHEBI:29105"/>
    </ligand>
</feature>
<feature type="binding site" evidence="1">
    <location>
        <position position="268"/>
    </location>
    <ligand>
        <name>Zn(2+)</name>
        <dbReference type="ChEBI" id="CHEBI:29105"/>
    </ligand>
</feature>
<reference key="1">
    <citation type="journal article" date="2009" name="BMC Genomics">
        <title>Metabolic analysis of the soil microbe Dechloromonas aromatica str. RCB: indications of a surprisingly complex life-style and cryptic anaerobic pathways for aromatic degradation.</title>
        <authorList>
            <person name="Salinero K.K."/>
            <person name="Keller K."/>
            <person name="Feil W.S."/>
            <person name="Feil H."/>
            <person name="Trong S."/>
            <person name="Di Bartolo G."/>
            <person name="Lapidus A."/>
        </authorList>
    </citation>
    <scope>NUCLEOTIDE SEQUENCE [LARGE SCALE GENOMIC DNA]</scope>
    <source>
        <strain>RCB</strain>
    </source>
</reference>
<accession>Q47JK6</accession>
<keyword id="KW-0028">Amino-acid biosynthesis</keyword>
<keyword id="KW-0057">Aromatic amino acid biosynthesis</keyword>
<keyword id="KW-0170">Cobalt</keyword>
<keyword id="KW-0963">Cytoplasm</keyword>
<keyword id="KW-0456">Lyase</keyword>
<keyword id="KW-0479">Metal-binding</keyword>
<keyword id="KW-0520">NAD</keyword>
<keyword id="KW-0547">Nucleotide-binding</keyword>
<keyword id="KW-0862">Zinc</keyword>
<dbReference type="EC" id="4.2.3.4" evidence="1"/>
<dbReference type="EMBL" id="CP000089">
    <property type="protein sequence ID" value="AAZ44975.1"/>
    <property type="molecule type" value="Genomic_DNA"/>
</dbReference>
<dbReference type="SMR" id="Q47JK6"/>
<dbReference type="STRING" id="159087.Daro_0216"/>
<dbReference type="KEGG" id="dar:Daro_0216"/>
<dbReference type="eggNOG" id="COG0337">
    <property type="taxonomic scope" value="Bacteria"/>
</dbReference>
<dbReference type="HOGENOM" id="CLU_001201_0_2_4"/>
<dbReference type="OrthoDB" id="9806583at2"/>
<dbReference type="UniPathway" id="UPA00053">
    <property type="reaction ID" value="UER00085"/>
</dbReference>
<dbReference type="GO" id="GO:0005737">
    <property type="term" value="C:cytoplasm"/>
    <property type="evidence" value="ECO:0007669"/>
    <property type="project" value="UniProtKB-SubCell"/>
</dbReference>
<dbReference type="GO" id="GO:0003856">
    <property type="term" value="F:3-dehydroquinate synthase activity"/>
    <property type="evidence" value="ECO:0007669"/>
    <property type="project" value="UniProtKB-UniRule"/>
</dbReference>
<dbReference type="GO" id="GO:0046872">
    <property type="term" value="F:metal ion binding"/>
    <property type="evidence" value="ECO:0007669"/>
    <property type="project" value="UniProtKB-KW"/>
</dbReference>
<dbReference type="GO" id="GO:0000166">
    <property type="term" value="F:nucleotide binding"/>
    <property type="evidence" value="ECO:0007669"/>
    <property type="project" value="UniProtKB-KW"/>
</dbReference>
<dbReference type="GO" id="GO:0008652">
    <property type="term" value="P:amino acid biosynthetic process"/>
    <property type="evidence" value="ECO:0007669"/>
    <property type="project" value="UniProtKB-KW"/>
</dbReference>
<dbReference type="GO" id="GO:0009073">
    <property type="term" value="P:aromatic amino acid family biosynthetic process"/>
    <property type="evidence" value="ECO:0007669"/>
    <property type="project" value="UniProtKB-KW"/>
</dbReference>
<dbReference type="GO" id="GO:0009423">
    <property type="term" value="P:chorismate biosynthetic process"/>
    <property type="evidence" value="ECO:0007669"/>
    <property type="project" value="UniProtKB-UniRule"/>
</dbReference>
<dbReference type="CDD" id="cd08195">
    <property type="entry name" value="DHQS"/>
    <property type="match status" value="1"/>
</dbReference>
<dbReference type="FunFam" id="1.20.1090.10:FF:000002">
    <property type="entry name" value="3-dehydroquinate synthase"/>
    <property type="match status" value="1"/>
</dbReference>
<dbReference type="FunFam" id="3.40.50.1970:FF:000001">
    <property type="entry name" value="3-dehydroquinate synthase"/>
    <property type="match status" value="1"/>
</dbReference>
<dbReference type="Gene3D" id="3.40.50.1970">
    <property type="match status" value="1"/>
</dbReference>
<dbReference type="Gene3D" id="1.20.1090.10">
    <property type="entry name" value="Dehydroquinate synthase-like - alpha domain"/>
    <property type="match status" value="1"/>
</dbReference>
<dbReference type="HAMAP" id="MF_00110">
    <property type="entry name" value="DHQ_synthase"/>
    <property type="match status" value="1"/>
</dbReference>
<dbReference type="InterPro" id="IPR050071">
    <property type="entry name" value="Dehydroquinate_synthase"/>
</dbReference>
<dbReference type="InterPro" id="IPR016037">
    <property type="entry name" value="DHQ_synth_AroB"/>
</dbReference>
<dbReference type="InterPro" id="IPR030963">
    <property type="entry name" value="DHQ_synth_fam"/>
</dbReference>
<dbReference type="InterPro" id="IPR030960">
    <property type="entry name" value="DHQS/DOIS_N"/>
</dbReference>
<dbReference type="InterPro" id="IPR056179">
    <property type="entry name" value="DHQS_C"/>
</dbReference>
<dbReference type="NCBIfam" id="TIGR01357">
    <property type="entry name" value="aroB"/>
    <property type="match status" value="1"/>
</dbReference>
<dbReference type="PANTHER" id="PTHR43622">
    <property type="entry name" value="3-DEHYDROQUINATE SYNTHASE"/>
    <property type="match status" value="1"/>
</dbReference>
<dbReference type="PANTHER" id="PTHR43622:SF7">
    <property type="entry name" value="3-DEHYDROQUINATE SYNTHASE, CHLOROPLASTIC"/>
    <property type="match status" value="1"/>
</dbReference>
<dbReference type="Pfam" id="PF01761">
    <property type="entry name" value="DHQ_synthase"/>
    <property type="match status" value="1"/>
</dbReference>
<dbReference type="Pfam" id="PF24621">
    <property type="entry name" value="DHQS_C"/>
    <property type="match status" value="1"/>
</dbReference>
<dbReference type="PIRSF" id="PIRSF001455">
    <property type="entry name" value="DHQ_synth"/>
    <property type="match status" value="1"/>
</dbReference>
<dbReference type="SUPFAM" id="SSF56796">
    <property type="entry name" value="Dehydroquinate synthase-like"/>
    <property type="match status" value="1"/>
</dbReference>
<protein>
    <recommendedName>
        <fullName evidence="1">3-dehydroquinate synthase</fullName>
        <shortName evidence="1">DHQS</shortName>
        <ecNumber evidence="1">4.2.3.4</ecNumber>
    </recommendedName>
</protein>
<organism>
    <name type="scientific">Dechloromonas aromatica (strain RCB)</name>
    <dbReference type="NCBI Taxonomy" id="159087"/>
    <lineage>
        <taxon>Bacteria</taxon>
        <taxon>Pseudomonadati</taxon>
        <taxon>Pseudomonadota</taxon>
        <taxon>Betaproteobacteria</taxon>
        <taxon>Rhodocyclales</taxon>
        <taxon>Azonexaceae</taxon>
        <taxon>Dechloromonas</taxon>
    </lineage>
</organism>
<evidence type="ECO:0000255" key="1">
    <source>
        <dbReference type="HAMAP-Rule" id="MF_00110"/>
    </source>
</evidence>
<comment type="function">
    <text evidence="1">Catalyzes the conversion of 3-deoxy-D-arabino-heptulosonate 7-phosphate (DAHP) to dehydroquinate (DHQ).</text>
</comment>
<comment type="catalytic activity">
    <reaction evidence="1">
        <text>7-phospho-2-dehydro-3-deoxy-D-arabino-heptonate = 3-dehydroquinate + phosphate</text>
        <dbReference type="Rhea" id="RHEA:21968"/>
        <dbReference type="ChEBI" id="CHEBI:32364"/>
        <dbReference type="ChEBI" id="CHEBI:43474"/>
        <dbReference type="ChEBI" id="CHEBI:58394"/>
        <dbReference type="EC" id="4.2.3.4"/>
    </reaction>
</comment>
<comment type="cofactor">
    <cofactor evidence="1">
        <name>Co(2+)</name>
        <dbReference type="ChEBI" id="CHEBI:48828"/>
    </cofactor>
    <cofactor evidence="1">
        <name>Zn(2+)</name>
        <dbReference type="ChEBI" id="CHEBI:29105"/>
    </cofactor>
    <text evidence="1">Binds 1 divalent metal cation per subunit. Can use either Co(2+) or Zn(2+).</text>
</comment>
<comment type="cofactor">
    <cofactor evidence="1">
        <name>NAD(+)</name>
        <dbReference type="ChEBI" id="CHEBI:57540"/>
    </cofactor>
</comment>
<comment type="pathway">
    <text evidence="1">Metabolic intermediate biosynthesis; chorismate biosynthesis; chorismate from D-erythrose 4-phosphate and phosphoenolpyruvate: step 2/7.</text>
</comment>
<comment type="subcellular location">
    <subcellularLocation>
        <location evidence="1">Cytoplasm</location>
    </subcellularLocation>
</comment>
<comment type="similarity">
    <text evidence="1">Belongs to the sugar phosphate cyclases superfamily. Dehydroquinate synthase family.</text>
</comment>